<accession>B9JXS2</accession>
<gene>
    <name evidence="1" type="primary">panC</name>
    <name type="ordered locus">Avi_2846</name>
</gene>
<reference key="1">
    <citation type="journal article" date="2009" name="J. Bacteriol.">
        <title>Genome sequences of three Agrobacterium biovars help elucidate the evolution of multichromosome genomes in bacteria.</title>
        <authorList>
            <person name="Slater S.C."/>
            <person name="Goldman B.S."/>
            <person name="Goodner B."/>
            <person name="Setubal J.C."/>
            <person name="Farrand S.K."/>
            <person name="Nester E.W."/>
            <person name="Burr T.J."/>
            <person name="Banta L."/>
            <person name="Dickerman A.W."/>
            <person name="Paulsen I."/>
            <person name="Otten L."/>
            <person name="Suen G."/>
            <person name="Welch R."/>
            <person name="Almeida N.F."/>
            <person name="Arnold F."/>
            <person name="Burton O.T."/>
            <person name="Du Z."/>
            <person name="Ewing A."/>
            <person name="Godsy E."/>
            <person name="Heisel S."/>
            <person name="Houmiel K.L."/>
            <person name="Jhaveri J."/>
            <person name="Lu J."/>
            <person name="Miller N.M."/>
            <person name="Norton S."/>
            <person name="Chen Q."/>
            <person name="Phoolcharoen W."/>
            <person name="Ohlin V."/>
            <person name="Ondrusek D."/>
            <person name="Pride N."/>
            <person name="Stricklin S.L."/>
            <person name="Sun J."/>
            <person name="Wheeler C."/>
            <person name="Wilson L."/>
            <person name="Zhu H."/>
            <person name="Wood D.W."/>
        </authorList>
    </citation>
    <scope>NUCLEOTIDE SEQUENCE [LARGE SCALE GENOMIC DNA]</scope>
    <source>
        <strain>ATCC BAA-846 / DSM 112012 / S4</strain>
    </source>
</reference>
<feature type="chain" id="PRO_1000123396" description="Pantothenate synthetase">
    <location>
        <begin position="1"/>
        <end position="289"/>
    </location>
</feature>
<feature type="active site" description="Proton donor" evidence="1">
    <location>
        <position position="37"/>
    </location>
</feature>
<feature type="binding site" evidence="1">
    <location>
        <begin position="30"/>
        <end position="37"/>
    </location>
    <ligand>
        <name>ATP</name>
        <dbReference type="ChEBI" id="CHEBI:30616"/>
    </ligand>
</feature>
<feature type="binding site" evidence="1">
    <location>
        <position position="61"/>
    </location>
    <ligand>
        <name>(R)-pantoate</name>
        <dbReference type="ChEBI" id="CHEBI:15980"/>
    </ligand>
</feature>
<feature type="binding site" evidence="1">
    <location>
        <position position="61"/>
    </location>
    <ligand>
        <name>beta-alanine</name>
        <dbReference type="ChEBI" id="CHEBI:57966"/>
    </ligand>
</feature>
<feature type="binding site" evidence="1">
    <location>
        <begin position="147"/>
        <end position="150"/>
    </location>
    <ligand>
        <name>ATP</name>
        <dbReference type="ChEBI" id="CHEBI:30616"/>
    </ligand>
</feature>
<feature type="binding site" evidence="1">
    <location>
        <position position="153"/>
    </location>
    <ligand>
        <name>(R)-pantoate</name>
        <dbReference type="ChEBI" id="CHEBI:15980"/>
    </ligand>
</feature>
<feature type="binding site" evidence="1">
    <location>
        <position position="176"/>
    </location>
    <ligand>
        <name>ATP</name>
        <dbReference type="ChEBI" id="CHEBI:30616"/>
    </ligand>
</feature>
<feature type="binding site" evidence="1">
    <location>
        <begin position="184"/>
        <end position="187"/>
    </location>
    <ligand>
        <name>ATP</name>
        <dbReference type="ChEBI" id="CHEBI:30616"/>
    </ligand>
</feature>
<protein>
    <recommendedName>
        <fullName evidence="1">Pantothenate synthetase</fullName>
        <shortName evidence="1">PS</shortName>
        <ecNumber evidence="1">6.3.2.1</ecNumber>
    </recommendedName>
    <alternativeName>
        <fullName evidence="1">Pantoate--beta-alanine ligase</fullName>
    </alternativeName>
    <alternativeName>
        <fullName evidence="1">Pantoate-activating enzyme</fullName>
    </alternativeName>
</protein>
<name>PANC_ALLAM</name>
<comment type="function">
    <text evidence="1">Catalyzes the condensation of pantoate with beta-alanine in an ATP-dependent reaction via a pantoyl-adenylate intermediate.</text>
</comment>
<comment type="catalytic activity">
    <reaction evidence="1">
        <text>(R)-pantoate + beta-alanine + ATP = (R)-pantothenate + AMP + diphosphate + H(+)</text>
        <dbReference type="Rhea" id="RHEA:10912"/>
        <dbReference type="ChEBI" id="CHEBI:15378"/>
        <dbReference type="ChEBI" id="CHEBI:15980"/>
        <dbReference type="ChEBI" id="CHEBI:29032"/>
        <dbReference type="ChEBI" id="CHEBI:30616"/>
        <dbReference type="ChEBI" id="CHEBI:33019"/>
        <dbReference type="ChEBI" id="CHEBI:57966"/>
        <dbReference type="ChEBI" id="CHEBI:456215"/>
        <dbReference type="EC" id="6.3.2.1"/>
    </reaction>
</comment>
<comment type="pathway">
    <text evidence="1">Cofactor biosynthesis; (R)-pantothenate biosynthesis; (R)-pantothenate from (R)-pantoate and beta-alanine: step 1/1.</text>
</comment>
<comment type="subunit">
    <text evidence="1">Homodimer.</text>
</comment>
<comment type="subcellular location">
    <subcellularLocation>
        <location evidence="1">Cytoplasm</location>
    </subcellularLocation>
</comment>
<comment type="miscellaneous">
    <text evidence="1">The reaction proceeds by a bi uni uni bi ping pong mechanism.</text>
</comment>
<comment type="similarity">
    <text evidence="1">Belongs to the pantothenate synthetase family.</text>
</comment>
<dbReference type="EC" id="6.3.2.1" evidence="1"/>
<dbReference type="EMBL" id="CP000633">
    <property type="protein sequence ID" value="ACM37049.1"/>
    <property type="molecule type" value="Genomic_DNA"/>
</dbReference>
<dbReference type="RefSeq" id="WP_015916470.1">
    <property type="nucleotide sequence ID" value="NC_011989.1"/>
</dbReference>
<dbReference type="SMR" id="B9JXS2"/>
<dbReference type="STRING" id="311402.Avi_2846"/>
<dbReference type="KEGG" id="avi:Avi_2846"/>
<dbReference type="eggNOG" id="COG0414">
    <property type="taxonomic scope" value="Bacteria"/>
</dbReference>
<dbReference type="HOGENOM" id="CLU_047148_0_0_5"/>
<dbReference type="UniPathway" id="UPA00028">
    <property type="reaction ID" value="UER00005"/>
</dbReference>
<dbReference type="Proteomes" id="UP000001596">
    <property type="component" value="Chromosome 1"/>
</dbReference>
<dbReference type="GO" id="GO:0005829">
    <property type="term" value="C:cytosol"/>
    <property type="evidence" value="ECO:0007669"/>
    <property type="project" value="TreeGrafter"/>
</dbReference>
<dbReference type="GO" id="GO:0005524">
    <property type="term" value="F:ATP binding"/>
    <property type="evidence" value="ECO:0007669"/>
    <property type="project" value="UniProtKB-KW"/>
</dbReference>
<dbReference type="GO" id="GO:0004592">
    <property type="term" value="F:pantoate-beta-alanine ligase activity"/>
    <property type="evidence" value="ECO:0007669"/>
    <property type="project" value="UniProtKB-UniRule"/>
</dbReference>
<dbReference type="GO" id="GO:0015940">
    <property type="term" value="P:pantothenate biosynthetic process"/>
    <property type="evidence" value="ECO:0007669"/>
    <property type="project" value="UniProtKB-UniRule"/>
</dbReference>
<dbReference type="CDD" id="cd00560">
    <property type="entry name" value="PanC"/>
    <property type="match status" value="1"/>
</dbReference>
<dbReference type="FunFam" id="3.40.50.620:FF:000013">
    <property type="entry name" value="Pantothenate synthetase"/>
    <property type="match status" value="1"/>
</dbReference>
<dbReference type="Gene3D" id="3.40.50.620">
    <property type="entry name" value="HUPs"/>
    <property type="match status" value="1"/>
</dbReference>
<dbReference type="Gene3D" id="3.30.1300.10">
    <property type="entry name" value="Pantoate-beta-alanine ligase, C-terminal domain"/>
    <property type="match status" value="1"/>
</dbReference>
<dbReference type="HAMAP" id="MF_00158">
    <property type="entry name" value="PanC"/>
    <property type="match status" value="1"/>
</dbReference>
<dbReference type="InterPro" id="IPR004821">
    <property type="entry name" value="Cyt_trans-like"/>
</dbReference>
<dbReference type="InterPro" id="IPR003721">
    <property type="entry name" value="Pantoate_ligase"/>
</dbReference>
<dbReference type="InterPro" id="IPR042176">
    <property type="entry name" value="Pantoate_ligase_C"/>
</dbReference>
<dbReference type="InterPro" id="IPR014729">
    <property type="entry name" value="Rossmann-like_a/b/a_fold"/>
</dbReference>
<dbReference type="NCBIfam" id="TIGR00125">
    <property type="entry name" value="cyt_tran_rel"/>
    <property type="match status" value="1"/>
</dbReference>
<dbReference type="NCBIfam" id="TIGR00018">
    <property type="entry name" value="panC"/>
    <property type="match status" value="1"/>
</dbReference>
<dbReference type="PANTHER" id="PTHR21299">
    <property type="entry name" value="CYTIDYLATE KINASE/PANTOATE-BETA-ALANINE LIGASE"/>
    <property type="match status" value="1"/>
</dbReference>
<dbReference type="PANTHER" id="PTHR21299:SF1">
    <property type="entry name" value="PANTOATE--BETA-ALANINE LIGASE"/>
    <property type="match status" value="1"/>
</dbReference>
<dbReference type="Pfam" id="PF02569">
    <property type="entry name" value="Pantoate_ligase"/>
    <property type="match status" value="1"/>
</dbReference>
<dbReference type="SUPFAM" id="SSF52374">
    <property type="entry name" value="Nucleotidylyl transferase"/>
    <property type="match status" value="1"/>
</dbReference>
<sequence length="289" mass="31623">MEIINTIAALRHRLDACRKAGKSIGFVPTMGYLHKGHLTLVEQAKAENAVTVASIFVNPLQFGKGEDLEKYPRDLERDSEMLEAAGVDFLFAPGVADMYPRPMETVVDLPGLGGELEGKARPGHFAGVATVVTKLFNIVQPDAAYFGEKDYQQVAIIRRMVDDLAMPVRVVPVATVREADGLACSSRNVYLTEEQRAAATIVPKALDEAERLYKAGMRDTAEMEAALAAFIAREPQAKPDVVAVRHPDTLATLPHLDQPFLVLLYVQIGTTKLLDNRVITIKSKKEAAE</sequence>
<evidence type="ECO:0000255" key="1">
    <source>
        <dbReference type="HAMAP-Rule" id="MF_00158"/>
    </source>
</evidence>
<keyword id="KW-0067">ATP-binding</keyword>
<keyword id="KW-0963">Cytoplasm</keyword>
<keyword id="KW-0436">Ligase</keyword>
<keyword id="KW-0547">Nucleotide-binding</keyword>
<keyword id="KW-0566">Pantothenate biosynthesis</keyword>
<keyword id="KW-1185">Reference proteome</keyword>
<organism>
    <name type="scientific">Allorhizobium ampelinum (strain ATCC BAA-846 / DSM 112012 / S4)</name>
    <name type="common">Agrobacterium vitis (strain S4)</name>
    <dbReference type="NCBI Taxonomy" id="311402"/>
    <lineage>
        <taxon>Bacteria</taxon>
        <taxon>Pseudomonadati</taxon>
        <taxon>Pseudomonadota</taxon>
        <taxon>Alphaproteobacteria</taxon>
        <taxon>Hyphomicrobiales</taxon>
        <taxon>Rhizobiaceae</taxon>
        <taxon>Rhizobium/Agrobacterium group</taxon>
        <taxon>Allorhizobium</taxon>
        <taxon>Allorhizobium ampelinum</taxon>
    </lineage>
</organism>
<proteinExistence type="inferred from homology"/>